<dbReference type="EC" id="6.1.1.6" evidence="1"/>
<dbReference type="EMBL" id="CP000425">
    <property type="protein sequence ID" value="ABJ72024.1"/>
    <property type="molecule type" value="Genomic_DNA"/>
</dbReference>
<dbReference type="RefSeq" id="WP_011675445.1">
    <property type="nucleotide sequence ID" value="NC_008527.1"/>
</dbReference>
<dbReference type="SMR" id="Q031U8"/>
<dbReference type="KEGG" id="llc:LACR_0417"/>
<dbReference type="HOGENOM" id="CLU_008255_6_0_9"/>
<dbReference type="Proteomes" id="UP000000240">
    <property type="component" value="Chromosome"/>
</dbReference>
<dbReference type="GO" id="GO:0005829">
    <property type="term" value="C:cytosol"/>
    <property type="evidence" value="ECO:0007669"/>
    <property type="project" value="TreeGrafter"/>
</dbReference>
<dbReference type="GO" id="GO:0005524">
    <property type="term" value="F:ATP binding"/>
    <property type="evidence" value="ECO:0007669"/>
    <property type="project" value="UniProtKB-UniRule"/>
</dbReference>
<dbReference type="GO" id="GO:0140096">
    <property type="term" value="F:catalytic activity, acting on a protein"/>
    <property type="evidence" value="ECO:0007669"/>
    <property type="project" value="UniProtKB-ARBA"/>
</dbReference>
<dbReference type="GO" id="GO:0004824">
    <property type="term" value="F:lysine-tRNA ligase activity"/>
    <property type="evidence" value="ECO:0007669"/>
    <property type="project" value="UniProtKB-UniRule"/>
</dbReference>
<dbReference type="GO" id="GO:0000287">
    <property type="term" value="F:magnesium ion binding"/>
    <property type="evidence" value="ECO:0007669"/>
    <property type="project" value="UniProtKB-UniRule"/>
</dbReference>
<dbReference type="GO" id="GO:0016740">
    <property type="term" value="F:transferase activity"/>
    <property type="evidence" value="ECO:0007669"/>
    <property type="project" value="UniProtKB-ARBA"/>
</dbReference>
<dbReference type="GO" id="GO:0000049">
    <property type="term" value="F:tRNA binding"/>
    <property type="evidence" value="ECO:0007669"/>
    <property type="project" value="TreeGrafter"/>
</dbReference>
<dbReference type="GO" id="GO:0006430">
    <property type="term" value="P:lysyl-tRNA aminoacylation"/>
    <property type="evidence" value="ECO:0007669"/>
    <property type="project" value="UniProtKB-UniRule"/>
</dbReference>
<dbReference type="CDD" id="cd00775">
    <property type="entry name" value="LysRS_core"/>
    <property type="match status" value="1"/>
</dbReference>
<dbReference type="CDD" id="cd04322">
    <property type="entry name" value="LysRS_N"/>
    <property type="match status" value="1"/>
</dbReference>
<dbReference type="FunFam" id="2.40.50.140:FF:000024">
    <property type="entry name" value="Lysine--tRNA ligase"/>
    <property type="match status" value="1"/>
</dbReference>
<dbReference type="FunFam" id="3.30.930.10:FF:000001">
    <property type="entry name" value="Lysine--tRNA ligase"/>
    <property type="match status" value="1"/>
</dbReference>
<dbReference type="Gene3D" id="3.30.930.10">
    <property type="entry name" value="Bira Bifunctional Protein, Domain 2"/>
    <property type="match status" value="1"/>
</dbReference>
<dbReference type="Gene3D" id="2.40.50.140">
    <property type="entry name" value="Nucleic acid-binding proteins"/>
    <property type="match status" value="1"/>
</dbReference>
<dbReference type="HAMAP" id="MF_00252">
    <property type="entry name" value="Lys_tRNA_synth_class2"/>
    <property type="match status" value="1"/>
</dbReference>
<dbReference type="InterPro" id="IPR004364">
    <property type="entry name" value="Aa-tRNA-synt_II"/>
</dbReference>
<dbReference type="InterPro" id="IPR006195">
    <property type="entry name" value="aa-tRNA-synth_II"/>
</dbReference>
<dbReference type="InterPro" id="IPR045864">
    <property type="entry name" value="aa-tRNA-synth_II/BPL/LPL"/>
</dbReference>
<dbReference type="InterPro" id="IPR002313">
    <property type="entry name" value="Lys-tRNA-ligase_II"/>
</dbReference>
<dbReference type="InterPro" id="IPR044136">
    <property type="entry name" value="Lys-tRNA-ligase_II_N"/>
</dbReference>
<dbReference type="InterPro" id="IPR018149">
    <property type="entry name" value="Lys-tRNA-synth_II_C"/>
</dbReference>
<dbReference type="InterPro" id="IPR012340">
    <property type="entry name" value="NA-bd_OB-fold"/>
</dbReference>
<dbReference type="InterPro" id="IPR004365">
    <property type="entry name" value="NA-bd_OB_tRNA"/>
</dbReference>
<dbReference type="NCBIfam" id="TIGR00499">
    <property type="entry name" value="lysS_bact"/>
    <property type="match status" value="1"/>
</dbReference>
<dbReference type="NCBIfam" id="NF001756">
    <property type="entry name" value="PRK00484.1"/>
    <property type="match status" value="1"/>
</dbReference>
<dbReference type="PANTHER" id="PTHR42918:SF15">
    <property type="entry name" value="LYSINE--TRNA LIGASE, CHLOROPLASTIC_MITOCHONDRIAL"/>
    <property type="match status" value="1"/>
</dbReference>
<dbReference type="PANTHER" id="PTHR42918">
    <property type="entry name" value="LYSYL-TRNA SYNTHETASE"/>
    <property type="match status" value="1"/>
</dbReference>
<dbReference type="Pfam" id="PF00152">
    <property type="entry name" value="tRNA-synt_2"/>
    <property type="match status" value="1"/>
</dbReference>
<dbReference type="Pfam" id="PF01336">
    <property type="entry name" value="tRNA_anti-codon"/>
    <property type="match status" value="1"/>
</dbReference>
<dbReference type="PRINTS" id="PR00982">
    <property type="entry name" value="TRNASYNTHLYS"/>
</dbReference>
<dbReference type="SUPFAM" id="SSF55681">
    <property type="entry name" value="Class II aaRS and biotin synthetases"/>
    <property type="match status" value="1"/>
</dbReference>
<dbReference type="SUPFAM" id="SSF50249">
    <property type="entry name" value="Nucleic acid-binding proteins"/>
    <property type="match status" value="1"/>
</dbReference>
<dbReference type="PROSITE" id="PS50862">
    <property type="entry name" value="AA_TRNA_LIGASE_II"/>
    <property type="match status" value="1"/>
</dbReference>
<comment type="catalytic activity">
    <reaction evidence="1">
        <text>tRNA(Lys) + L-lysine + ATP = L-lysyl-tRNA(Lys) + AMP + diphosphate</text>
        <dbReference type="Rhea" id="RHEA:20792"/>
        <dbReference type="Rhea" id="RHEA-COMP:9696"/>
        <dbReference type="Rhea" id="RHEA-COMP:9697"/>
        <dbReference type="ChEBI" id="CHEBI:30616"/>
        <dbReference type="ChEBI" id="CHEBI:32551"/>
        <dbReference type="ChEBI" id="CHEBI:33019"/>
        <dbReference type="ChEBI" id="CHEBI:78442"/>
        <dbReference type="ChEBI" id="CHEBI:78529"/>
        <dbReference type="ChEBI" id="CHEBI:456215"/>
        <dbReference type="EC" id="6.1.1.6"/>
    </reaction>
</comment>
<comment type="cofactor">
    <cofactor evidence="1">
        <name>Mg(2+)</name>
        <dbReference type="ChEBI" id="CHEBI:18420"/>
    </cofactor>
    <text evidence="1">Binds 3 Mg(2+) ions per subunit.</text>
</comment>
<comment type="subunit">
    <text evidence="1">Homodimer.</text>
</comment>
<comment type="subcellular location">
    <subcellularLocation>
        <location evidence="1">Cytoplasm</location>
    </subcellularLocation>
</comment>
<comment type="similarity">
    <text evidence="1">Belongs to the class-II aminoacyl-tRNA synthetase family.</text>
</comment>
<accession>Q031U8</accession>
<proteinExistence type="inferred from homology"/>
<sequence length="494" mass="56526">MAEIEELNDQMKVRREKMGNLHDAGIDPFGHKFTRTHNSQELHEAYDEKTKEELHELALSGIVAGRLMTKRGKGKVGFAHLQDREGQIQLYVRKDEVGEENYEIFKKADLGDFLGVEGEIMKTDMGELSIKAKKLTFLSKALRPLPEKFHGLTDTETRYRKRYLDLISNKESFNRFVTRSKIISEIRRYMDGRGYLEVETPVLNNEAGGASARPFYTHHNSLDIDMALRIATELHLKRLIVGGMEKVYELGRVFRNEGMDMTHNPEFTTMESYEAYADFEDIMDLTEGIFQHVAKTVVGQDVLEYDGKEINVGGKFKRVHMVDAIKEVAGVDFWPEMTFEEATALAKEHDIHVEKHFTSVGHIINEFFEKYVEETLIQPTFVFGHPKEISPLAKMNEKDPRFTDRFELFINGKEYANAFSELNDPIDQLERFEAQAKAKELGDDEATGVDYDYVEALEHGMPPTGGLGIGIDRLVMLFTGTTSIRDVLLFPTMK</sequence>
<name>SYK_LACLS</name>
<protein>
    <recommendedName>
        <fullName evidence="1">Lysine--tRNA ligase</fullName>
        <ecNumber evidence="1">6.1.1.6</ecNumber>
    </recommendedName>
    <alternativeName>
        <fullName evidence="1">Lysyl-tRNA synthetase</fullName>
        <shortName evidence="1">LysRS</shortName>
    </alternativeName>
</protein>
<organism>
    <name type="scientific">Lactococcus lactis subsp. cremoris (strain SK11)</name>
    <dbReference type="NCBI Taxonomy" id="272622"/>
    <lineage>
        <taxon>Bacteria</taxon>
        <taxon>Bacillati</taxon>
        <taxon>Bacillota</taxon>
        <taxon>Bacilli</taxon>
        <taxon>Lactobacillales</taxon>
        <taxon>Streptococcaceae</taxon>
        <taxon>Lactococcus</taxon>
        <taxon>Lactococcus cremoris subsp. cremoris</taxon>
    </lineage>
</organism>
<keyword id="KW-0030">Aminoacyl-tRNA synthetase</keyword>
<keyword id="KW-0067">ATP-binding</keyword>
<keyword id="KW-0963">Cytoplasm</keyword>
<keyword id="KW-0436">Ligase</keyword>
<keyword id="KW-0460">Magnesium</keyword>
<keyword id="KW-0479">Metal-binding</keyword>
<keyword id="KW-0547">Nucleotide-binding</keyword>
<keyword id="KW-0648">Protein biosynthesis</keyword>
<gene>
    <name evidence="1" type="primary">lysS</name>
    <name type="ordered locus">LACR_0417</name>
</gene>
<reference key="1">
    <citation type="journal article" date="2006" name="Proc. Natl. Acad. Sci. U.S.A.">
        <title>Comparative genomics of the lactic acid bacteria.</title>
        <authorList>
            <person name="Makarova K.S."/>
            <person name="Slesarev A."/>
            <person name="Wolf Y.I."/>
            <person name="Sorokin A."/>
            <person name="Mirkin B."/>
            <person name="Koonin E.V."/>
            <person name="Pavlov A."/>
            <person name="Pavlova N."/>
            <person name="Karamychev V."/>
            <person name="Polouchine N."/>
            <person name="Shakhova V."/>
            <person name="Grigoriev I."/>
            <person name="Lou Y."/>
            <person name="Rohksar D."/>
            <person name="Lucas S."/>
            <person name="Huang K."/>
            <person name="Goodstein D.M."/>
            <person name="Hawkins T."/>
            <person name="Plengvidhya V."/>
            <person name="Welker D."/>
            <person name="Hughes J."/>
            <person name="Goh Y."/>
            <person name="Benson A."/>
            <person name="Baldwin K."/>
            <person name="Lee J.-H."/>
            <person name="Diaz-Muniz I."/>
            <person name="Dosti B."/>
            <person name="Smeianov V."/>
            <person name="Wechter W."/>
            <person name="Barabote R."/>
            <person name="Lorca G."/>
            <person name="Altermann E."/>
            <person name="Barrangou R."/>
            <person name="Ganesan B."/>
            <person name="Xie Y."/>
            <person name="Rawsthorne H."/>
            <person name="Tamir D."/>
            <person name="Parker C."/>
            <person name="Breidt F."/>
            <person name="Broadbent J.R."/>
            <person name="Hutkins R."/>
            <person name="O'Sullivan D."/>
            <person name="Steele J."/>
            <person name="Unlu G."/>
            <person name="Saier M.H. Jr."/>
            <person name="Klaenhammer T."/>
            <person name="Richardson P."/>
            <person name="Kozyavkin S."/>
            <person name="Weimer B.C."/>
            <person name="Mills D.A."/>
        </authorList>
    </citation>
    <scope>NUCLEOTIDE SEQUENCE [LARGE SCALE GENOMIC DNA]</scope>
    <source>
        <strain>SK11</strain>
    </source>
</reference>
<feature type="chain" id="PRO_1000012881" description="Lysine--tRNA ligase">
    <location>
        <begin position="1"/>
        <end position="494"/>
    </location>
</feature>
<feature type="binding site" evidence="1">
    <location>
        <position position="407"/>
    </location>
    <ligand>
        <name>Mg(2+)</name>
        <dbReference type="ChEBI" id="CHEBI:18420"/>
        <label>1</label>
    </ligand>
</feature>
<feature type="binding site" evidence="1">
    <location>
        <position position="414"/>
    </location>
    <ligand>
        <name>Mg(2+)</name>
        <dbReference type="ChEBI" id="CHEBI:18420"/>
        <label>1</label>
    </ligand>
</feature>
<feature type="binding site" evidence="1">
    <location>
        <position position="414"/>
    </location>
    <ligand>
        <name>Mg(2+)</name>
        <dbReference type="ChEBI" id="CHEBI:18420"/>
        <label>2</label>
    </ligand>
</feature>
<evidence type="ECO:0000255" key="1">
    <source>
        <dbReference type="HAMAP-Rule" id="MF_00252"/>
    </source>
</evidence>